<comment type="function">
    <text evidence="1">Involved in mRNA degradation. Catalyzes the phosphorolysis of single-stranded polyribonucleotides processively in the 3'- to 5'-direction.</text>
</comment>
<comment type="catalytic activity">
    <reaction evidence="1">
        <text>RNA(n+1) + phosphate = RNA(n) + a ribonucleoside 5'-diphosphate</text>
        <dbReference type="Rhea" id="RHEA:22096"/>
        <dbReference type="Rhea" id="RHEA-COMP:14527"/>
        <dbReference type="Rhea" id="RHEA-COMP:17342"/>
        <dbReference type="ChEBI" id="CHEBI:43474"/>
        <dbReference type="ChEBI" id="CHEBI:57930"/>
        <dbReference type="ChEBI" id="CHEBI:140395"/>
        <dbReference type="EC" id="2.7.7.8"/>
    </reaction>
</comment>
<comment type="cofactor">
    <cofactor evidence="1">
        <name>Mg(2+)</name>
        <dbReference type="ChEBI" id="CHEBI:18420"/>
    </cofactor>
</comment>
<comment type="subcellular location">
    <subcellularLocation>
        <location evidence="1">Cytoplasm</location>
    </subcellularLocation>
</comment>
<comment type="similarity">
    <text evidence="1">Belongs to the polyribonucleotide nucleotidyltransferase family.</text>
</comment>
<dbReference type="EC" id="2.7.7.8" evidence="1"/>
<dbReference type="EMBL" id="CU458896">
    <property type="protein sequence ID" value="CAM63183.1"/>
    <property type="molecule type" value="Genomic_DNA"/>
</dbReference>
<dbReference type="RefSeq" id="WP_005081771.1">
    <property type="nucleotide sequence ID" value="NZ_MLCG01000003.1"/>
</dbReference>
<dbReference type="SMR" id="B1MD62"/>
<dbReference type="GeneID" id="93380038"/>
<dbReference type="KEGG" id="mab:MAB_3106c"/>
<dbReference type="Proteomes" id="UP000007137">
    <property type="component" value="Chromosome"/>
</dbReference>
<dbReference type="GO" id="GO:0005829">
    <property type="term" value="C:cytosol"/>
    <property type="evidence" value="ECO:0007669"/>
    <property type="project" value="TreeGrafter"/>
</dbReference>
<dbReference type="GO" id="GO:0000175">
    <property type="term" value="F:3'-5'-RNA exonuclease activity"/>
    <property type="evidence" value="ECO:0007669"/>
    <property type="project" value="TreeGrafter"/>
</dbReference>
<dbReference type="GO" id="GO:0000287">
    <property type="term" value="F:magnesium ion binding"/>
    <property type="evidence" value="ECO:0007669"/>
    <property type="project" value="UniProtKB-UniRule"/>
</dbReference>
<dbReference type="GO" id="GO:0004654">
    <property type="term" value="F:polyribonucleotide nucleotidyltransferase activity"/>
    <property type="evidence" value="ECO:0007669"/>
    <property type="project" value="UniProtKB-UniRule"/>
</dbReference>
<dbReference type="GO" id="GO:0003723">
    <property type="term" value="F:RNA binding"/>
    <property type="evidence" value="ECO:0007669"/>
    <property type="project" value="UniProtKB-UniRule"/>
</dbReference>
<dbReference type="GO" id="GO:0006402">
    <property type="term" value="P:mRNA catabolic process"/>
    <property type="evidence" value="ECO:0007669"/>
    <property type="project" value="UniProtKB-UniRule"/>
</dbReference>
<dbReference type="GO" id="GO:0006396">
    <property type="term" value="P:RNA processing"/>
    <property type="evidence" value="ECO:0007669"/>
    <property type="project" value="InterPro"/>
</dbReference>
<dbReference type="CDD" id="cd02393">
    <property type="entry name" value="KH-I_PNPase"/>
    <property type="match status" value="1"/>
</dbReference>
<dbReference type="CDD" id="cd11364">
    <property type="entry name" value="RNase_PH_PNPase_2"/>
    <property type="match status" value="1"/>
</dbReference>
<dbReference type="CDD" id="cd04472">
    <property type="entry name" value="S1_PNPase"/>
    <property type="match status" value="1"/>
</dbReference>
<dbReference type="FunFam" id="2.40.50.140:FF:000069">
    <property type="entry name" value="Polyribonucleotide nucleotidyltransferase"/>
    <property type="match status" value="1"/>
</dbReference>
<dbReference type="FunFam" id="3.30.1370.10:FF:000001">
    <property type="entry name" value="Polyribonucleotide nucleotidyltransferase"/>
    <property type="match status" value="1"/>
</dbReference>
<dbReference type="FunFam" id="3.30.230.70:FF:000002">
    <property type="entry name" value="Polyribonucleotide nucleotidyltransferase"/>
    <property type="match status" value="1"/>
</dbReference>
<dbReference type="Gene3D" id="3.30.230.70">
    <property type="entry name" value="GHMP Kinase, N-terminal domain"/>
    <property type="match status" value="2"/>
</dbReference>
<dbReference type="Gene3D" id="3.30.1370.10">
    <property type="entry name" value="K Homology domain, type 1"/>
    <property type="match status" value="1"/>
</dbReference>
<dbReference type="Gene3D" id="2.40.50.140">
    <property type="entry name" value="Nucleic acid-binding proteins"/>
    <property type="match status" value="1"/>
</dbReference>
<dbReference type="HAMAP" id="MF_01595">
    <property type="entry name" value="PNPase"/>
    <property type="match status" value="1"/>
</dbReference>
<dbReference type="InterPro" id="IPR001247">
    <property type="entry name" value="ExoRNase_PH_dom1"/>
</dbReference>
<dbReference type="InterPro" id="IPR036345">
    <property type="entry name" value="ExoRNase_PH_dom2_sf"/>
</dbReference>
<dbReference type="InterPro" id="IPR014069">
    <property type="entry name" value="GPSI/PNP"/>
</dbReference>
<dbReference type="InterPro" id="IPR004087">
    <property type="entry name" value="KH_dom"/>
</dbReference>
<dbReference type="InterPro" id="IPR004088">
    <property type="entry name" value="KH_dom_type_1"/>
</dbReference>
<dbReference type="InterPro" id="IPR036612">
    <property type="entry name" value="KH_dom_type_1_sf"/>
</dbReference>
<dbReference type="InterPro" id="IPR012340">
    <property type="entry name" value="NA-bd_OB-fold"/>
</dbReference>
<dbReference type="InterPro" id="IPR012162">
    <property type="entry name" value="PNPase"/>
</dbReference>
<dbReference type="InterPro" id="IPR027408">
    <property type="entry name" value="PNPase/RNase_PH_dom_sf"/>
</dbReference>
<dbReference type="InterPro" id="IPR015848">
    <property type="entry name" value="PNPase_PH_RNA-bd_bac/org-type"/>
</dbReference>
<dbReference type="InterPro" id="IPR036456">
    <property type="entry name" value="PNPase_PH_RNA-bd_sf"/>
</dbReference>
<dbReference type="InterPro" id="IPR020568">
    <property type="entry name" value="Ribosomal_Su5_D2-typ_SF"/>
</dbReference>
<dbReference type="InterPro" id="IPR003029">
    <property type="entry name" value="S1_domain"/>
</dbReference>
<dbReference type="NCBIfam" id="TIGR03591">
    <property type="entry name" value="polynuc_phos"/>
    <property type="match status" value="1"/>
</dbReference>
<dbReference type="NCBIfam" id="TIGR02696">
    <property type="entry name" value="pppGpp_PNP"/>
    <property type="match status" value="1"/>
</dbReference>
<dbReference type="NCBIfam" id="NF008805">
    <property type="entry name" value="PRK11824.1"/>
    <property type="match status" value="1"/>
</dbReference>
<dbReference type="PANTHER" id="PTHR11252">
    <property type="entry name" value="POLYRIBONUCLEOTIDE NUCLEOTIDYLTRANSFERASE"/>
    <property type="match status" value="1"/>
</dbReference>
<dbReference type="PANTHER" id="PTHR11252:SF0">
    <property type="entry name" value="POLYRIBONUCLEOTIDE NUCLEOTIDYLTRANSFERASE 1, MITOCHONDRIAL"/>
    <property type="match status" value="1"/>
</dbReference>
<dbReference type="Pfam" id="PF00013">
    <property type="entry name" value="KH_1"/>
    <property type="match status" value="1"/>
</dbReference>
<dbReference type="Pfam" id="PF03726">
    <property type="entry name" value="PNPase"/>
    <property type="match status" value="1"/>
</dbReference>
<dbReference type="Pfam" id="PF01138">
    <property type="entry name" value="RNase_PH"/>
    <property type="match status" value="2"/>
</dbReference>
<dbReference type="Pfam" id="PF00575">
    <property type="entry name" value="S1"/>
    <property type="match status" value="1"/>
</dbReference>
<dbReference type="PIRSF" id="PIRSF005499">
    <property type="entry name" value="PNPase"/>
    <property type="match status" value="1"/>
</dbReference>
<dbReference type="SMART" id="SM00322">
    <property type="entry name" value="KH"/>
    <property type="match status" value="1"/>
</dbReference>
<dbReference type="SMART" id="SM00316">
    <property type="entry name" value="S1"/>
    <property type="match status" value="1"/>
</dbReference>
<dbReference type="SUPFAM" id="SSF54791">
    <property type="entry name" value="Eukaryotic type KH-domain (KH-domain type I)"/>
    <property type="match status" value="1"/>
</dbReference>
<dbReference type="SUPFAM" id="SSF50249">
    <property type="entry name" value="Nucleic acid-binding proteins"/>
    <property type="match status" value="1"/>
</dbReference>
<dbReference type="SUPFAM" id="SSF46915">
    <property type="entry name" value="Polynucleotide phosphorylase/guanosine pentaphosphate synthase (PNPase/GPSI), domain 3"/>
    <property type="match status" value="1"/>
</dbReference>
<dbReference type="SUPFAM" id="SSF55666">
    <property type="entry name" value="Ribonuclease PH domain 2-like"/>
    <property type="match status" value="2"/>
</dbReference>
<dbReference type="SUPFAM" id="SSF54211">
    <property type="entry name" value="Ribosomal protein S5 domain 2-like"/>
    <property type="match status" value="2"/>
</dbReference>
<dbReference type="PROSITE" id="PS50084">
    <property type="entry name" value="KH_TYPE_1"/>
    <property type="match status" value="1"/>
</dbReference>
<dbReference type="PROSITE" id="PS50126">
    <property type="entry name" value="S1"/>
    <property type="match status" value="1"/>
</dbReference>
<name>PNP_MYCA9</name>
<feature type="chain" id="PRO_1000147933" description="Polyribonucleotide nucleotidyltransferase">
    <location>
        <begin position="1"/>
        <end position="755"/>
    </location>
</feature>
<feature type="domain" description="KH" evidence="1">
    <location>
        <begin position="593"/>
        <end position="652"/>
    </location>
</feature>
<feature type="domain" description="S1 motif" evidence="1">
    <location>
        <begin position="664"/>
        <end position="733"/>
    </location>
</feature>
<feature type="region of interest" description="Disordered" evidence="2">
    <location>
        <begin position="734"/>
        <end position="755"/>
    </location>
</feature>
<feature type="compositionally biased region" description="Low complexity" evidence="2">
    <location>
        <begin position="740"/>
        <end position="755"/>
    </location>
</feature>
<feature type="binding site" evidence="1">
    <location>
        <position position="527"/>
    </location>
    <ligand>
        <name>Mg(2+)</name>
        <dbReference type="ChEBI" id="CHEBI:18420"/>
    </ligand>
</feature>
<feature type="binding site" evidence="1">
    <location>
        <position position="533"/>
    </location>
    <ligand>
        <name>Mg(2+)</name>
        <dbReference type="ChEBI" id="CHEBI:18420"/>
    </ligand>
</feature>
<proteinExistence type="inferred from homology"/>
<sequence length="755" mass="79793">MSVTEIEEGIFESTATIDNGSFGTRTIRFETGRLALQAAGSVVAYLDDETMLLSTTAASKTPKDHFDFFPLTVDVEERMYAAGRIPGSFFRREGRPSTDAILTCRLIDRPLRPSFVSGLRNEIQVVVTVLSLNPADLYDVLAINAASASTQLAGLPFSGPVGGVRVALIEGQWVAFPTVEQLEKAVFDMVVAGRKVGTAGDSDVAIMMVEAEATDNVIALIDGGAGAPTETVVAEGLEAAKPFIAALCTAQEELAGSAAKPTGEFPLFPDYQDDVYAAVAAVATEPLSQALSIAGKAERDEKTDEIKVDVLGRLQEGFDGREKEIGAAFRSLTKKLVRQRILKDQFRIDGRGVTDIRALSAEVAVIPRAHGSALFERGETQIMGVTTLDMIKMAQQVDSLGPETTKRYMHHYNFPPFSTGETGRVGSPKRREIGHGALAERALIPVLPSIEEFPYAIRQVSEALGSNGSTSMGSVCASTLALLNAGVPLKAPVAGIAMGLVSDDIELADGTAERRFVALTDILGAEDAFGDMDFKVAGTKDFVTALQLDTKLDGIPSQVLAAALSQAKDARTTILEVMAEAIDAPDEMSPYAPRITTIKVPVDKIGEVIGPKGKMINSITEETGANISIEDDGTVFVGAADGASAQAAIDKINAIANPQLPKIGERFLGTVVKTTDFGAFVSLLPGRDGLVHISKLGKGKRIAKVEDVVKVGDKIQVEIADIDNRGKISLVPVGEEDAAEAPAPAEAQPADAVTQ</sequence>
<reference key="1">
    <citation type="journal article" date="2009" name="PLoS ONE">
        <title>Non mycobacterial virulence genes in the genome of the emerging pathogen Mycobacterium abscessus.</title>
        <authorList>
            <person name="Ripoll F."/>
            <person name="Pasek S."/>
            <person name="Schenowitz C."/>
            <person name="Dossat C."/>
            <person name="Barbe V."/>
            <person name="Rottman M."/>
            <person name="Macheras E."/>
            <person name="Heym B."/>
            <person name="Herrmann J.L."/>
            <person name="Daffe M."/>
            <person name="Brosch R."/>
            <person name="Risler J.L."/>
            <person name="Gaillard J.L."/>
        </authorList>
    </citation>
    <scope>NUCLEOTIDE SEQUENCE [LARGE SCALE GENOMIC DNA]</scope>
    <source>
        <strain>ATCC 19977 / DSM 44196 / CCUG 20993 / CIP 104536 / JCM 13569 / NCTC 13031 / TMC 1543 / L948</strain>
    </source>
</reference>
<evidence type="ECO:0000255" key="1">
    <source>
        <dbReference type="HAMAP-Rule" id="MF_01595"/>
    </source>
</evidence>
<evidence type="ECO:0000256" key="2">
    <source>
        <dbReference type="SAM" id="MobiDB-lite"/>
    </source>
</evidence>
<protein>
    <recommendedName>
        <fullName evidence="1">Polyribonucleotide nucleotidyltransferase</fullName>
        <ecNumber evidence="1">2.7.7.8</ecNumber>
    </recommendedName>
    <alternativeName>
        <fullName evidence="1">Polynucleotide phosphorylase</fullName>
        <shortName evidence="1">PNPase</shortName>
    </alternativeName>
</protein>
<keyword id="KW-0963">Cytoplasm</keyword>
<keyword id="KW-0460">Magnesium</keyword>
<keyword id="KW-0479">Metal-binding</keyword>
<keyword id="KW-0548">Nucleotidyltransferase</keyword>
<keyword id="KW-1185">Reference proteome</keyword>
<keyword id="KW-0694">RNA-binding</keyword>
<keyword id="KW-0808">Transferase</keyword>
<accession>B1MD62</accession>
<organism>
    <name type="scientific">Mycobacteroides abscessus (strain ATCC 19977 / DSM 44196 / CCUG 20993 / CIP 104536 / JCM 13569 / NCTC 13031 / TMC 1543 / L948)</name>
    <name type="common">Mycobacterium abscessus</name>
    <dbReference type="NCBI Taxonomy" id="561007"/>
    <lineage>
        <taxon>Bacteria</taxon>
        <taxon>Bacillati</taxon>
        <taxon>Actinomycetota</taxon>
        <taxon>Actinomycetes</taxon>
        <taxon>Mycobacteriales</taxon>
        <taxon>Mycobacteriaceae</taxon>
        <taxon>Mycobacteroides</taxon>
        <taxon>Mycobacteroides abscessus</taxon>
    </lineage>
</organism>
<gene>
    <name evidence="1" type="primary">pnp</name>
    <name type="ordered locus">MAB_3106c</name>
</gene>